<protein>
    <recommendedName>
        <fullName evidence="1">4-hydroxy-tetrahydrodipicolinate reductase</fullName>
        <shortName evidence="1">HTPA reductase</shortName>
        <ecNumber evidence="1">1.17.1.8</ecNumber>
    </recommendedName>
</protein>
<dbReference type="EC" id="1.17.1.8" evidence="1"/>
<dbReference type="EMBL" id="AE006470">
    <property type="protein sequence ID" value="AAM73070.1"/>
    <property type="molecule type" value="Genomic_DNA"/>
</dbReference>
<dbReference type="RefSeq" id="NP_662728.1">
    <property type="nucleotide sequence ID" value="NC_002932.3"/>
</dbReference>
<dbReference type="RefSeq" id="WP_010933509.1">
    <property type="nucleotide sequence ID" value="NC_002932.3"/>
</dbReference>
<dbReference type="SMR" id="Q8KBD8"/>
<dbReference type="STRING" id="194439.CT1850"/>
<dbReference type="EnsemblBacteria" id="AAM73070">
    <property type="protein sequence ID" value="AAM73070"/>
    <property type="gene ID" value="CT1850"/>
</dbReference>
<dbReference type="KEGG" id="cte:CT1850"/>
<dbReference type="PATRIC" id="fig|194439.7.peg.1679"/>
<dbReference type="eggNOG" id="COG0289">
    <property type="taxonomic scope" value="Bacteria"/>
</dbReference>
<dbReference type="HOGENOM" id="CLU_047479_1_0_10"/>
<dbReference type="OrthoDB" id="9790352at2"/>
<dbReference type="UniPathway" id="UPA00034">
    <property type="reaction ID" value="UER00018"/>
</dbReference>
<dbReference type="Proteomes" id="UP000001007">
    <property type="component" value="Chromosome"/>
</dbReference>
<dbReference type="GO" id="GO:0005829">
    <property type="term" value="C:cytosol"/>
    <property type="evidence" value="ECO:0007669"/>
    <property type="project" value="TreeGrafter"/>
</dbReference>
<dbReference type="GO" id="GO:0008839">
    <property type="term" value="F:4-hydroxy-tetrahydrodipicolinate reductase"/>
    <property type="evidence" value="ECO:0007669"/>
    <property type="project" value="UniProtKB-EC"/>
</dbReference>
<dbReference type="GO" id="GO:0051287">
    <property type="term" value="F:NAD binding"/>
    <property type="evidence" value="ECO:0007669"/>
    <property type="project" value="UniProtKB-UniRule"/>
</dbReference>
<dbReference type="GO" id="GO:0050661">
    <property type="term" value="F:NADP binding"/>
    <property type="evidence" value="ECO:0007669"/>
    <property type="project" value="UniProtKB-UniRule"/>
</dbReference>
<dbReference type="GO" id="GO:0016726">
    <property type="term" value="F:oxidoreductase activity, acting on CH or CH2 groups, NAD or NADP as acceptor"/>
    <property type="evidence" value="ECO:0007669"/>
    <property type="project" value="UniProtKB-UniRule"/>
</dbReference>
<dbReference type="GO" id="GO:0019877">
    <property type="term" value="P:diaminopimelate biosynthetic process"/>
    <property type="evidence" value="ECO:0007669"/>
    <property type="project" value="UniProtKB-UniRule"/>
</dbReference>
<dbReference type="GO" id="GO:0009089">
    <property type="term" value="P:lysine biosynthetic process via diaminopimelate"/>
    <property type="evidence" value="ECO:0007669"/>
    <property type="project" value="UniProtKB-UniRule"/>
</dbReference>
<dbReference type="Gene3D" id="3.30.360.10">
    <property type="entry name" value="Dihydrodipicolinate Reductase, domain 2"/>
    <property type="match status" value="1"/>
</dbReference>
<dbReference type="Gene3D" id="3.40.50.720">
    <property type="entry name" value="NAD(P)-binding Rossmann-like Domain"/>
    <property type="match status" value="1"/>
</dbReference>
<dbReference type="HAMAP" id="MF_00102">
    <property type="entry name" value="DapB"/>
    <property type="match status" value="1"/>
</dbReference>
<dbReference type="InterPro" id="IPR022663">
    <property type="entry name" value="DapB_C"/>
</dbReference>
<dbReference type="InterPro" id="IPR000846">
    <property type="entry name" value="DapB_N"/>
</dbReference>
<dbReference type="InterPro" id="IPR023940">
    <property type="entry name" value="DHDPR_bac"/>
</dbReference>
<dbReference type="InterPro" id="IPR036291">
    <property type="entry name" value="NAD(P)-bd_dom_sf"/>
</dbReference>
<dbReference type="NCBIfam" id="TIGR00036">
    <property type="entry name" value="dapB"/>
    <property type="match status" value="1"/>
</dbReference>
<dbReference type="PANTHER" id="PTHR20836:SF0">
    <property type="entry name" value="4-HYDROXY-TETRAHYDRODIPICOLINATE REDUCTASE 1, CHLOROPLASTIC-RELATED"/>
    <property type="match status" value="1"/>
</dbReference>
<dbReference type="PANTHER" id="PTHR20836">
    <property type="entry name" value="DIHYDRODIPICOLINATE REDUCTASE"/>
    <property type="match status" value="1"/>
</dbReference>
<dbReference type="Pfam" id="PF05173">
    <property type="entry name" value="DapB_C"/>
    <property type="match status" value="1"/>
</dbReference>
<dbReference type="Pfam" id="PF01113">
    <property type="entry name" value="DapB_N"/>
    <property type="match status" value="1"/>
</dbReference>
<dbReference type="PIRSF" id="PIRSF000161">
    <property type="entry name" value="DHPR"/>
    <property type="match status" value="1"/>
</dbReference>
<dbReference type="SUPFAM" id="SSF55347">
    <property type="entry name" value="Glyceraldehyde-3-phosphate dehydrogenase-like, C-terminal domain"/>
    <property type="match status" value="1"/>
</dbReference>
<dbReference type="SUPFAM" id="SSF51735">
    <property type="entry name" value="NAD(P)-binding Rossmann-fold domains"/>
    <property type="match status" value="1"/>
</dbReference>
<accession>Q8KBD8</accession>
<gene>
    <name evidence="1" type="primary">dapB</name>
    <name type="ordered locus">CT1850</name>
</gene>
<sequence>MKITLVGNGRMGRQIADVVAASGAHVVNRVLDVNDTIDAAAFSGSDVIIDFTVRSAFLANYPALIASGVPVVVGTTGWDDVMPQVREEVVKARSTMLYSANYSLGVNIFFRTLREAARLIAPFEQFDIALSEQHHTGKADFPSGTAIKAADEILNSNPRKRTIVRELQEGRKLQSDELQVASIRLGSVFGVHSAIIDSESDTIELTHTAKNRTGFASGAVRAAEWLVQRHATSPGFYTMDDFLNDLFSA</sequence>
<comment type="function">
    <text evidence="1">Catalyzes the conversion of 4-hydroxy-tetrahydrodipicolinate (HTPA) to tetrahydrodipicolinate.</text>
</comment>
<comment type="catalytic activity">
    <reaction evidence="1">
        <text>(S)-2,3,4,5-tetrahydrodipicolinate + NAD(+) + H2O = (2S,4S)-4-hydroxy-2,3,4,5-tetrahydrodipicolinate + NADH + H(+)</text>
        <dbReference type="Rhea" id="RHEA:35323"/>
        <dbReference type="ChEBI" id="CHEBI:15377"/>
        <dbReference type="ChEBI" id="CHEBI:15378"/>
        <dbReference type="ChEBI" id="CHEBI:16845"/>
        <dbReference type="ChEBI" id="CHEBI:57540"/>
        <dbReference type="ChEBI" id="CHEBI:57945"/>
        <dbReference type="ChEBI" id="CHEBI:67139"/>
        <dbReference type="EC" id="1.17.1.8"/>
    </reaction>
</comment>
<comment type="catalytic activity">
    <reaction evidence="1">
        <text>(S)-2,3,4,5-tetrahydrodipicolinate + NADP(+) + H2O = (2S,4S)-4-hydroxy-2,3,4,5-tetrahydrodipicolinate + NADPH + H(+)</text>
        <dbReference type="Rhea" id="RHEA:35331"/>
        <dbReference type="ChEBI" id="CHEBI:15377"/>
        <dbReference type="ChEBI" id="CHEBI:15378"/>
        <dbReference type="ChEBI" id="CHEBI:16845"/>
        <dbReference type="ChEBI" id="CHEBI:57783"/>
        <dbReference type="ChEBI" id="CHEBI:58349"/>
        <dbReference type="ChEBI" id="CHEBI:67139"/>
        <dbReference type="EC" id="1.17.1.8"/>
    </reaction>
</comment>
<comment type="pathway">
    <text evidence="1">Amino-acid biosynthesis; L-lysine biosynthesis via DAP pathway; (S)-tetrahydrodipicolinate from L-aspartate: step 4/4.</text>
</comment>
<comment type="subcellular location">
    <subcellularLocation>
        <location evidence="1">Cytoplasm</location>
    </subcellularLocation>
</comment>
<comment type="similarity">
    <text evidence="1">Belongs to the DapB family.</text>
</comment>
<comment type="caution">
    <text evidence="2">Was originally thought to be a dihydrodipicolinate reductase (DHDPR), catalyzing the conversion of dihydrodipicolinate to tetrahydrodipicolinate. However, it was shown in E.coli that the substrate of the enzymatic reaction is not dihydrodipicolinate (DHDP) but in fact (2S,4S)-4-hydroxy-2,3,4,5-tetrahydrodipicolinic acid (HTPA), the product released by the DapA-catalyzed reaction.</text>
</comment>
<name>DAPB_CHLTE</name>
<evidence type="ECO:0000255" key="1">
    <source>
        <dbReference type="HAMAP-Rule" id="MF_00102"/>
    </source>
</evidence>
<evidence type="ECO:0000305" key="2"/>
<reference key="1">
    <citation type="journal article" date="2002" name="Proc. Natl. Acad. Sci. U.S.A.">
        <title>The complete genome sequence of Chlorobium tepidum TLS, a photosynthetic, anaerobic, green-sulfur bacterium.</title>
        <authorList>
            <person name="Eisen J.A."/>
            <person name="Nelson K.E."/>
            <person name="Paulsen I.T."/>
            <person name="Heidelberg J.F."/>
            <person name="Wu M."/>
            <person name="Dodson R.J."/>
            <person name="DeBoy R.T."/>
            <person name="Gwinn M.L."/>
            <person name="Nelson W.C."/>
            <person name="Haft D.H."/>
            <person name="Hickey E.K."/>
            <person name="Peterson J.D."/>
            <person name="Durkin A.S."/>
            <person name="Kolonay J.F."/>
            <person name="Yang F."/>
            <person name="Holt I.E."/>
            <person name="Umayam L.A."/>
            <person name="Mason T.M."/>
            <person name="Brenner M."/>
            <person name="Shea T.P."/>
            <person name="Parksey D.S."/>
            <person name="Nierman W.C."/>
            <person name="Feldblyum T.V."/>
            <person name="Hansen C.L."/>
            <person name="Craven M.B."/>
            <person name="Radune D."/>
            <person name="Vamathevan J.J."/>
            <person name="Khouri H.M."/>
            <person name="White O."/>
            <person name="Gruber T.M."/>
            <person name="Ketchum K.A."/>
            <person name="Venter J.C."/>
            <person name="Tettelin H."/>
            <person name="Bryant D.A."/>
            <person name="Fraser C.M."/>
        </authorList>
    </citation>
    <scope>NUCLEOTIDE SEQUENCE [LARGE SCALE GENOMIC DNA]</scope>
    <source>
        <strain>ATCC 49652 / DSM 12025 / NBRC 103806 / TLS</strain>
    </source>
</reference>
<proteinExistence type="inferred from homology"/>
<keyword id="KW-0028">Amino-acid biosynthesis</keyword>
<keyword id="KW-0963">Cytoplasm</keyword>
<keyword id="KW-0220">Diaminopimelate biosynthesis</keyword>
<keyword id="KW-0457">Lysine biosynthesis</keyword>
<keyword id="KW-0520">NAD</keyword>
<keyword id="KW-0521">NADP</keyword>
<keyword id="KW-0560">Oxidoreductase</keyword>
<keyword id="KW-1185">Reference proteome</keyword>
<organism>
    <name type="scientific">Chlorobaculum tepidum (strain ATCC 49652 / DSM 12025 / NBRC 103806 / TLS)</name>
    <name type="common">Chlorobium tepidum</name>
    <dbReference type="NCBI Taxonomy" id="194439"/>
    <lineage>
        <taxon>Bacteria</taxon>
        <taxon>Pseudomonadati</taxon>
        <taxon>Chlorobiota</taxon>
        <taxon>Chlorobiia</taxon>
        <taxon>Chlorobiales</taxon>
        <taxon>Chlorobiaceae</taxon>
        <taxon>Chlorobaculum</taxon>
    </lineage>
</organism>
<feature type="chain" id="PRO_1000093957" description="4-hydroxy-tetrahydrodipicolinate reductase">
    <location>
        <begin position="1"/>
        <end position="249"/>
    </location>
</feature>
<feature type="active site" description="Proton donor/acceptor" evidence="1">
    <location>
        <position position="134"/>
    </location>
</feature>
<feature type="active site" description="Proton donor" evidence="1">
    <location>
        <position position="138"/>
    </location>
</feature>
<feature type="binding site" evidence="1">
    <location>
        <position position="32"/>
    </location>
    <ligand>
        <name>NAD(+)</name>
        <dbReference type="ChEBI" id="CHEBI:57540"/>
    </ligand>
</feature>
<feature type="binding site" evidence="1">
    <location>
        <begin position="74"/>
        <end position="76"/>
    </location>
    <ligand>
        <name>NAD(+)</name>
        <dbReference type="ChEBI" id="CHEBI:57540"/>
    </ligand>
</feature>
<feature type="binding site" evidence="1">
    <location>
        <begin position="99"/>
        <end position="102"/>
    </location>
    <ligand>
        <name>NAD(+)</name>
        <dbReference type="ChEBI" id="CHEBI:57540"/>
    </ligand>
</feature>
<feature type="binding site" evidence="1">
    <location>
        <position position="135"/>
    </location>
    <ligand>
        <name>(S)-2,3,4,5-tetrahydrodipicolinate</name>
        <dbReference type="ChEBI" id="CHEBI:16845"/>
    </ligand>
</feature>
<feature type="binding site" evidence="1">
    <location>
        <begin position="144"/>
        <end position="145"/>
    </location>
    <ligand>
        <name>(S)-2,3,4,5-tetrahydrodipicolinate</name>
        <dbReference type="ChEBI" id="CHEBI:16845"/>
    </ligand>
</feature>